<sequence>MARVKRGVTTRARHKKVIKLAKGYRGRSKNCYRIALQRVEKALQYAYRDRRNRKRFFRSLWIMRINAAVRQHGLLYSDFIHGLSLANVTLNRKVLADMAVNHKDHFKQIVDLIKEALNKSRVAQ</sequence>
<protein>
    <recommendedName>
        <fullName evidence="1">Large ribosomal subunit protein bL20</fullName>
    </recommendedName>
    <alternativeName>
        <fullName evidence="2">50S ribosomal protein L20</fullName>
    </alternativeName>
</protein>
<evidence type="ECO:0000255" key="1">
    <source>
        <dbReference type="HAMAP-Rule" id="MF_00382"/>
    </source>
</evidence>
<evidence type="ECO:0000305" key="2"/>
<organism>
    <name type="scientific">Ehrlichia chaffeensis (strain ATCC CRL-10679 / Arkansas)</name>
    <dbReference type="NCBI Taxonomy" id="205920"/>
    <lineage>
        <taxon>Bacteria</taxon>
        <taxon>Pseudomonadati</taxon>
        <taxon>Pseudomonadota</taxon>
        <taxon>Alphaproteobacteria</taxon>
        <taxon>Rickettsiales</taxon>
        <taxon>Anaplasmataceae</taxon>
        <taxon>Ehrlichia</taxon>
    </lineage>
</organism>
<gene>
    <name evidence="1" type="primary">rplT</name>
    <name type="ordered locus">ECH_0197</name>
</gene>
<name>RL20_EHRCR</name>
<dbReference type="EMBL" id="CP000236">
    <property type="protein sequence ID" value="ABD45437.1"/>
    <property type="molecule type" value="Genomic_DNA"/>
</dbReference>
<dbReference type="RefSeq" id="WP_006010467.1">
    <property type="nucleotide sequence ID" value="NC_007799.1"/>
</dbReference>
<dbReference type="SMR" id="Q2GHR2"/>
<dbReference type="STRING" id="205920.ECH_0197"/>
<dbReference type="KEGG" id="ech:ECH_0197"/>
<dbReference type="eggNOG" id="COG0292">
    <property type="taxonomic scope" value="Bacteria"/>
</dbReference>
<dbReference type="HOGENOM" id="CLU_123265_0_1_5"/>
<dbReference type="OrthoDB" id="9808966at2"/>
<dbReference type="Proteomes" id="UP000008320">
    <property type="component" value="Chromosome"/>
</dbReference>
<dbReference type="GO" id="GO:1990904">
    <property type="term" value="C:ribonucleoprotein complex"/>
    <property type="evidence" value="ECO:0007669"/>
    <property type="project" value="UniProtKB-KW"/>
</dbReference>
<dbReference type="GO" id="GO:0005840">
    <property type="term" value="C:ribosome"/>
    <property type="evidence" value="ECO:0007669"/>
    <property type="project" value="UniProtKB-KW"/>
</dbReference>
<dbReference type="GO" id="GO:0019843">
    <property type="term" value="F:rRNA binding"/>
    <property type="evidence" value="ECO:0007669"/>
    <property type="project" value="UniProtKB-UniRule"/>
</dbReference>
<dbReference type="GO" id="GO:0003735">
    <property type="term" value="F:structural constituent of ribosome"/>
    <property type="evidence" value="ECO:0007669"/>
    <property type="project" value="InterPro"/>
</dbReference>
<dbReference type="GO" id="GO:0000027">
    <property type="term" value="P:ribosomal large subunit assembly"/>
    <property type="evidence" value="ECO:0007669"/>
    <property type="project" value="UniProtKB-UniRule"/>
</dbReference>
<dbReference type="GO" id="GO:0006412">
    <property type="term" value="P:translation"/>
    <property type="evidence" value="ECO:0007669"/>
    <property type="project" value="InterPro"/>
</dbReference>
<dbReference type="CDD" id="cd07026">
    <property type="entry name" value="Ribosomal_L20"/>
    <property type="match status" value="1"/>
</dbReference>
<dbReference type="FunFam" id="1.10.1900.20:FF:000001">
    <property type="entry name" value="50S ribosomal protein L20"/>
    <property type="match status" value="1"/>
</dbReference>
<dbReference type="Gene3D" id="6.10.160.10">
    <property type="match status" value="1"/>
</dbReference>
<dbReference type="Gene3D" id="1.10.1900.20">
    <property type="entry name" value="Ribosomal protein L20"/>
    <property type="match status" value="1"/>
</dbReference>
<dbReference type="HAMAP" id="MF_00382">
    <property type="entry name" value="Ribosomal_bL20"/>
    <property type="match status" value="1"/>
</dbReference>
<dbReference type="InterPro" id="IPR005813">
    <property type="entry name" value="Ribosomal_bL20"/>
</dbReference>
<dbReference type="InterPro" id="IPR049946">
    <property type="entry name" value="RIBOSOMAL_L20_CS"/>
</dbReference>
<dbReference type="InterPro" id="IPR035566">
    <property type="entry name" value="Ribosomal_protein_bL20_C"/>
</dbReference>
<dbReference type="NCBIfam" id="TIGR01032">
    <property type="entry name" value="rplT_bact"/>
    <property type="match status" value="1"/>
</dbReference>
<dbReference type="PANTHER" id="PTHR10986">
    <property type="entry name" value="39S RIBOSOMAL PROTEIN L20"/>
    <property type="match status" value="1"/>
</dbReference>
<dbReference type="Pfam" id="PF00453">
    <property type="entry name" value="Ribosomal_L20"/>
    <property type="match status" value="1"/>
</dbReference>
<dbReference type="PRINTS" id="PR00062">
    <property type="entry name" value="RIBOSOMALL20"/>
</dbReference>
<dbReference type="SUPFAM" id="SSF74731">
    <property type="entry name" value="Ribosomal protein L20"/>
    <property type="match status" value="1"/>
</dbReference>
<dbReference type="PROSITE" id="PS00937">
    <property type="entry name" value="RIBOSOMAL_L20"/>
    <property type="match status" value="1"/>
</dbReference>
<reference key="1">
    <citation type="journal article" date="2006" name="PLoS Genet.">
        <title>Comparative genomics of emerging human ehrlichiosis agents.</title>
        <authorList>
            <person name="Dunning Hotopp J.C."/>
            <person name="Lin M."/>
            <person name="Madupu R."/>
            <person name="Crabtree J."/>
            <person name="Angiuoli S.V."/>
            <person name="Eisen J.A."/>
            <person name="Seshadri R."/>
            <person name="Ren Q."/>
            <person name="Wu M."/>
            <person name="Utterback T.R."/>
            <person name="Smith S."/>
            <person name="Lewis M."/>
            <person name="Khouri H."/>
            <person name="Zhang C."/>
            <person name="Niu H."/>
            <person name="Lin Q."/>
            <person name="Ohashi N."/>
            <person name="Zhi N."/>
            <person name="Nelson W.C."/>
            <person name="Brinkac L.M."/>
            <person name="Dodson R.J."/>
            <person name="Rosovitz M.J."/>
            <person name="Sundaram J.P."/>
            <person name="Daugherty S.C."/>
            <person name="Davidsen T."/>
            <person name="Durkin A.S."/>
            <person name="Gwinn M.L."/>
            <person name="Haft D.H."/>
            <person name="Selengut J.D."/>
            <person name="Sullivan S.A."/>
            <person name="Zafar N."/>
            <person name="Zhou L."/>
            <person name="Benahmed F."/>
            <person name="Forberger H."/>
            <person name="Halpin R."/>
            <person name="Mulligan S."/>
            <person name="Robinson J."/>
            <person name="White O."/>
            <person name="Rikihisa Y."/>
            <person name="Tettelin H."/>
        </authorList>
    </citation>
    <scope>NUCLEOTIDE SEQUENCE [LARGE SCALE GENOMIC DNA]</scope>
    <source>
        <strain>ATCC CRL-10679 / Arkansas</strain>
    </source>
</reference>
<feature type="chain" id="PRO_0000243679" description="Large ribosomal subunit protein bL20">
    <location>
        <begin position="1"/>
        <end position="124"/>
    </location>
</feature>
<comment type="function">
    <text evidence="1">Binds directly to 23S ribosomal RNA and is necessary for the in vitro assembly process of the 50S ribosomal subunit. It is not involved in the protein synthesizing functions of that subunit.</text>
</comment>
<comment type="similarity">
    <text evidence="1">Belongs to the bacterial ribosomal protein bL20 family.</text>
</comment>
<proteinExistence type="inferred from homology"/>
<accession>Q2GHR2</accession>
<keyword id="KW-1185">Reference proteome</keyword>
<keyword id="KW-0687">Ribonucleoprotein</keyword>
<keyword id="KW-0689">Ribosomal protein</keyword>
<keyword id="KW-0694">RNA-binding</keyword>
<keyword id="KW-0699">rRNA-binding</keyword>